<name>LPXH_SHESM</name>
<protein>
    <recommendedName>
        <fullName evidence="1">UDP-2,3-diacylglucosamine hydrolase</fullName>
        <ecNumber evidence="1">3.6.1.54</ecNumber>
    </recommendedName>
    <alternativeName>
        <fullName evidence="1">UDP-2,3-diacylglucosamine diphosphatase</fullName>
    </alternativeName>
</protein>
<sequence>MRTLFIGDLHLSADRLDITKAFNRFLDTELDDADALYILGDLFEVWVGDDLAAPFALELARRLKQISQRLPIYFIHGNRDFMLGKQFTDAAGMQMLPEVTCLDLYGVSTVILHGDSLCTLDKAYQRFRKLRSFAFARWLYSCLPKRKRQAIANKIRSNSQSSNQQKSYVIMDVEPSAVDALFAQTHCKQMIHGHTHRPAIHNFTNGCKRIVVGDWYEQGSVLVVSADGVDLKSLPFDAS</sequence>
<organism>
    <name type="scientific">Shewanella sp. (strain MR-4)</name>
    <dbReference type="NCBI Taxonomy" id="60480"/>
    <lineage>
        <taxon>Bacteria</taxon>
        <taxon>Pseudomonadati</taxon>
        <taxon>Pseudomonadota</taxon>
        <taxon>Gammaproteobacteria</taxon>
        <taxon>Alteromonadales</taxon>
        <taxon>Shewanellaceae</taxon>
        <taxon>Shewanella</taxon>
    </lineage>
</organism>
<proteinExistence type="inferred from homology"/>
<accession>Q0HH96</accession>
<gene>
    <name evidence="1" type="primary">lpxH</name>
    <name type="ordered locus">Shewmr4_2500</name>
</gene>
<feature type="chain" id="PRO_1000025087" description="UDP-2,3-diacylglucosamine hydrolase">
    <location>
        <begin position="1"/>
        <end position="239"/>
    </location>
</feature>
<feature type="binding site" evidence="1">
    <location>
        <position position="8"/>
    </location>
    <ligand>
        <name>Mn(2+)</name>
        <dbReference type="ChEBI" id="CHEBI:29035"/>
        <label>1</label>
    </ligand>
</feature>
<feature type="binding site" evidence="1">
    <location>
        <position position="10"/>
    </location>
    <ligand>
        <name>Mn(2+)</name>
        <dbReference type="ChEBI" id="CHEBI:29035"/>
        <label>1</label>
    </ligand>
</feature>
<feature type="binding site" evidence="1">
    <location>
        <position position="41"/>
    </location>
    <ligand>
        <name>Mn(2+)</name>
        <dbReference type="ChEBI" id="CHEBI:29035"/>
        <label>1</label>
    </ligand>
</feature>
<feature type="binding site" evidence="1">
    <location>
        <position position="41"/>
    </location>
    <ligand>
        <name>Mn(2+)</name>
        <dbReference type="ChEBI" id="CHEBI:29035"/>
        <label>2</label>
    </ligand>
</feature>
<feature type="binding site" evidence="1">
    <location>
        <begin position="78"/>
        <end position="79"/>
    </location>
    <ligand>
        <name>substrate</name>
    </ligand>
</feature>
<feature type="binding site" evidence="1">
    <location>
        <position position="78"/>
    </location>
    <ligand>
        <name>Mn(2+)</name>
        <dbReference type="ChEBI" id="CHEBI:29035"/>
        <label>2</label>
    </ligand>
</feature>
<feature type="binding site" evidence="1">
    <location>
        <position position="113"/>
    </location>
    <ligand>
        <name>Mn(2+)</name>
        <dbReference type="ChEBI" id="CHEBI:29035"/>
        <label>2</label>
    </ligand>
</feature>
<feature type="binding site" evidence="1">
    <location>
        <position position="121"/>
    </location>
    <ligand>
        <name>substrate</name>
    </ligand>
</feature>
<feature type="binding site" evidence="1">
    <location>
        <position position="159"/>
    </location>
    <ligand>
        <name>substrate</name>
    </ligand>
</feature>
<feature type="binding site" evidence="1">
    <location>
        <position position="163"/>
    </location>
    <ligand>
        <name>substrate</name>
    </ligand>
</feature>
<feature type="binding site" evidence="1">
    <location>
        <position position="166"/>
    </location>
    <ligand>
        <name>substrate</name>
    </ligand>
</feature>
<feature type="binding site" evidence="1">
    <location>
        <position position="194"/>
    </location>
    <ligand>
        <name>Mn(2+)</name>
        <dbReference type="ChEBI" id="CHEBI:29035"/>
        <label>2</label>
    </ligand>
</feature>
<feature type="binding site" evidence="1">
    <location>
        <position position="194"/>
    </location>
    <ligand>
        <name>substrate</name>
    </ligand>
</feature>
<feature type="binding site" evidence="1">
    <location>
        <position position="196"/>
    </location>
    <ligand>
        <name>Mn(2+)</name>
        <dbReference type="ChEBI" id="CHEBI:29035"/>
        <label>1</label>
    </ligand>
</feature>
<dbReference type="EC" id="3.6.1.54" evidence="1"/>
<dbReference type="EMBL" id="CP000446">
    <property type="protein sequence ID" value="ABI39571.1"/>
    <property type="molecule type" value="Genomic_DNA"/>
</dbReference>
<dbReference type="RefSeq" id="WP_011623252.1">
    <property type="nucleotide sequence ID" value="NC_008321.1"/>
</dbReference>
<dbReference type="SMR" id="Q0HH96"/>
<dbReference type="KEGG" id="she:Shewmr4_2500"/>
<dbReference type="HOGENOM" id="CLU_074586_0_0_6"/>
<dbReference type="UniPathway" id="UPA00359">
    <property type="reaction ID" value="UER00480"/>
</dbReference>
<dbReference type="GO" id="GO:0005737">
    <property type="term" value="C:cytoplasm"/>
    <property type="evidence" value="ECO:0007669"/>
    <property type="project" value="InterPro"/>
</dbReference>
<dbReference type="GO" id="GO:0019897">
    <property type="term" value="C:extrinsic component of plasma membrane"/>
    <property type="evidence" value="ECO:0007669"/>
    <property type="project" value="UniProtKB-UniRule"/>
</dbReference>
<dbReference type="GO" id="GO:0030145">
    <property type="term" value="F:manganese ion binding"/>
    <property type="evidence" value="ECO:0007669"/>
    <property type="project" value="UniProtKB-UniRule"/>
</dbReference>
<dbReference type="GO" id="GO:0008758">
    <property type="term" value="F:UDP-2,3-diacylglucosamine hydrolase activity"/>
    <property type="evidence" value="ECO:0007669"/>
    <property type="project" value="UniProtKB-UniRule"/>
</dbReference>
<dbReference type="GO" id="GO:0009245">
    <property type="term" value="P:lipid A biosynthetic process"/>
    <property type="evidence" value="ECO:0007669"/>
    <property type="project" value="UniProtKB-UniRule"/>
</dbReference>
<dbReference type="CDD" id="cd07398">
    <property type="entry name" value="MPP_YbbF-LpxH"/>
    <property type="match status" value="1"/>
</dbReference>
<dbReference type="Gene3D" id="3.60.21.10">
    <property type="match status" value="1"/>
</dbReference>
<dbReference type="HAMAP" id="MF_00575">
    <property type="entry name" value="LpxH"/>
    <property type="match status" value="1"/>
</dbReference>
<dbReference type="InterPro" id="IPR004843">
    <property type="entry name" value="Calcineurin-like_PHP_ApaH"/>
</dbReference>
<dbReference type="InterPro" id="IPR043461">
    <property type="entry name" value="LpxH-like"/>
</dbReference>
<dbReference type="InterPro" id="IPR029052">
    <property type="entry name" value="Metallo-depent_PP-like"/>
</dbReference>
<dbReference type="InterPro" id="IPR010138">
    <property type="entry name" value="UDP-diacylglucosamine_Hdrlase"/>
</dbReference>
<dbReference type="NCBIfam" id="TIGR01854">
    <property type="entry name" value="lipid_A_lpxH"/>
    <property type="match status" value="1"/>
</dbReference>
<dbReference type="NCBIfam" id="NF003743">
    <property type="entry name" value="PRK05340.1"/>
    <property type="match status" value="1"/>
</dbReference>
<dbReference type="PANTHER" id="PTHR34990:SF1">
    <property type="entry name" value="UDP-2,3-DIACYLGLUCOSAMINE HYDROLASE"/>
    <property type="match status" value="1"/>
</dbReference>
<dbReference type="PANTHER" id="PTHR34990">
    <property type="entry name" value="UDP-2,3-DIACYLGLUCOSAMINE HYDROLASE-RELATED"/>
    <property type="match status" value="1"/>
</dbReference>
<dbReference type="Pfam" id="PF00149">
    <property type="entry name" value="Metallophos"/>
    <property type="match status" value="1"/>
</dbReference>
<dbReference type="SUPFAM" id="SSF56300">
    <property type="entry name" value="Metallo-dependent phosphatases"/>
    <property type="match status" value="1"/>
</dbReference>
<reference key="1">
    <citation type="submission" date="2006-08" db="EMBL/GenBank/DDBJ databases">
        <title>Complete sequence of Shewanella sp. MR-4.</title>
        <authorList>
            <consortium name="US DOE Joint Genome Institute"/>
            <person name="Copeland A."/>
            <person name="Lucas S."/>
            <person name="Lapidus A."/>
            <person name="Barry K."/>
            <person name="Detter J.C."/>
            <person name="Glavina del Rio T."/>
            <person name="Hammon N."/>
            <person name="Israni S."/>
            <person name="Dalin E."/>
            <person name="Tice H."/>
            <person name="Pitluck S."/>
            <person name="Kiss H."/>
            <person name="Brettin T."/>
            <person name="Bruce D."/>
            <person name="Han C."/>
            <person name="Tapia R."/>
            <person name="Gilna P."/>
            <person name="Schmutz J."/>
            <person name="Larimer F."/>
            <person name="Land M."/>
            <person name="Hauser L."/>
            <person name="Kyrpides N."/>
            <person name="Mikhailova N."/>
            <person name="Nealson K."/>
            <person name="Konstantinidis K."/>
            <person name="Klappenbach J."/>
            <person name="Tiedje J."/>
            <person name="Richardson P."/>
        </authorList>
    </citation>
    <scope>NUCLEOTIDE SEQUENCE [LARGE SCALE GENOMIC DNA]</scope>
    <source>
        <strain>MR-4</strain>
    </source>
</reference>
<keyword id="KW-0997">Cell inner membrane</keyword>
<keyword id="KW-1003">Cell membrane</keyword>
<keyword id="KW-0378">Hydrolase</keyword>
<keyword id="KW-0441">Lipid A biosynthesis</keyword>
<keyword id="KW-0444">Lipid biosynthesis</keyword>
<keyword id="KW-0443">Lipid metabolism</keyword>
<keyword id="KW-0464">Manganese</keyword>
<keyword id="KW-0472">Membrane</keyword>
<keyword id="KW-0479">Metal-binding</keyword>
<evidence type="ECO:0000255" key="1">
    <source>
        <dbReference type="HAMAP-Rule" id="MF_00575"/>
    </source>
</evidence>
<comment type="function">
    <text evidence="1">Hydrolyzes the pyrophosphate bond of UDP-2,3-diacylglucosamine to yield 2,3-diacylglucosamine 1-phosphate (lipid X) and UMP by catalyzing the attack of water at the alpha-P atom. Involved in the biosynthesis of lipid A, a phosphorylated glycolipid that anchors the lipopolysaccharide to the outer membrane of the cell.</text>
</comment>
<comment type="catalytic activity">
    <reaction evidence="1">
        <text>UDP-2-N,3-O-bis[(3R)-3-hydroxytetradecanoyl]-alpha-D-glucosamine + H2O = 2-N,3-O-bis[(3R)-3-hydroxytetradecanoyl]-alpha-D-glucosaminyl 1-phosphate + UMP + 2 H(+)</text>
        <dbReference type="Rhea" id="RHEA:25213"/>
        <dbReference type="ChEBI" id="CHEBI:15377"/>
        <dbReference type="ChEBI" id="CHEBI:15378"/>
        <dbReference type="ChEBI" id="CHEBI:57865"/>
        <dbReference type="ChEBI" id="CHEBI:57957"/>
        <dbReference type="ChEBI" id="CHEBI:78847"/>
        <dbReference type="EC" id="3.6.1.54"/>
    </reaction>
</comment>
<comment type="cofactor">
    <cofactor evidence="1">
        <name>Mn(2+)</name>
        <dbReference type="ChEBI" id="CHEBI:29035"/>
    </cofactor>
    <text evidence="1">Binds 2 Mn(2+) ions per subunit in a binuclear metal center.</text>
</comment>
<comment type="pathway">
    <text evidence="1">Glycolipid biosynthesis; lipid IV(A) biosynthesis; lipid IV(A) from (3R)-3-hydroxytetradecanoyl-[acyl-carrier-protein] and UDP-N-acetyl-alpha-D-glucosamine: step 4/6.</text>
</comment>
<comment type="subcellular location">
    <subcellularLocation>
        <location evidence="1">Cell inner membrane</location>
        <topology evidence="1">Peripheral membrane protein</topology>
        <orientation evidence="1">Cytoplasmic side</orientation>
    </subcellularLocation>
</comment>
<comment type="similarity">
    <text evidence="1">Belongs to the LpxH family.</text>
</comment>